<feature type="chain" id="PRO_0000224400" description="DNA mismatch repair protein MutS">
    <location>
        <begin position="1"/>
        <end position="891"/>
    </location>
</feature>
<feature type="binding site" evidence="1">
    <location>
        <begin position="646"/>
        <end position="653"/>
    </location>
    <ligand>
        <name>ATP</name>
        <dbReference type="ChEBI" id="CHEBI:30616"/>
    </ligand>
</feature>
<dbReference type="EMBL" id="AE017197">
    <property type="protein sequence ID" value="AAU03769.1"/>
    <property type="molecule type" value="Genomic_DNA"/>
</dbReference>
<dbReference type="SMR" id="Q68X73"/>
<dbReference type="KEGG" id="rty:RT0289"/>
<dbReference type="eggNOG" id="COG0249">
    <property type="taxonomic scope" value="Bacteria"/>
</dbReference>
<dbReference type="HOGENOM" id="CLU_002472_3_1_5"/>
<dbReference type="OrthoDB" id="9802448at2"/>
<dbReference type="Proteomes" id="UP000000604">
    <property type="component" value="Chromosome"/>
</dbReference>
<dbReference type="GO" id="GO:0005524">
    <property type="term" value="F:ATP binding"/>
    <property type="evidence" value="ECO:0007669"/>
    <property type="project" value="UniProtKB-UniRule"/>
</dbReference>
<dbReference type="GO" id="GO:0140664">
    <property type="term" value="F:ATP-dependent DNA damage sensor activity"/>
    <property type="evidence" value="ECO:0007669"/>
    <property type="project" value="InterPro"/>
</dbReference>
<dbReference type="GO" id="GO:0003684">
    <property type="term" value="F:damaged DNA binding"/>
    <property type="evidence" value="ECO:0007669"/>
    <property type="project" value="UniProtKB-UniRule"/>
</dbReference>
<dbReference type="GO" id="GO:0030983">
    <property type="term" value="F:mismatched DNA binding"/>
    <property type="evidence" value="ECO:0007669"/>
    <property type="project" value="InterPro"/>
</dbReference>
<dbReference type="GO" id="GO:0006298">
    <property type="term" value="P:mismatch repair"/>
    <property type="evidence" value="ECO:0007669"/>
    <property type="project" value="UniProtKB-UniRule"/>
</dbReference>
<dbReference type="CDD" id="cd03284">
    <property type="entry name" value="ABC_MutS1"/>
    <property type="match status" value="1"/>
</dbReference>
<dbReference type="FunFam" id="3.40.1170.10:FF:000001">
    <property type="entry name" value="DNA mismatch repair protein MutS"/>
    <property type="match status" value="1"/>
</dbReference>
<dbReference type="FunFam" id="3.40.50.300:FF:000870">
    <property type="entry name" value="MutS protein homolog 4"/>
    <property type="match status" value="1"/>
</dbReference>
<dbReference type="Gene3D" id="1.10.1420.10">
    <property type="match status" value="2"/>
</dbReference>
<dbReference type="Gene3D" id="6.10.140.430">
    <property type="match status" value="1"/>
</dbReference>
<dbReference type="Gene3D" id="3.40.1170.10">
    <property type="entry name" value="DNA repair protein MutS, domain I"/>
    <property type="match status" value="1"/>
</dbReference>
<dbReference type="Gene3D" id="3.30.420.110">
    <property type="entry name" value="MutS, connector domain"/>
    <property type="match status" value="1"/>
</dbReference>
<dbReference type="Gene3D" id="3.40.50.300">
    <property type="entry name" value="P-loop containing nucleotide triphosphate hydrolases"/>
    <property type="match status" value="1"/>
</dbReference>
<dbReference type="HAMAP" id="MF_00096">
    <property type="entry name" value="MutS"/>
    <property type="match status" value="1"/>
</dbReference>
<dbReference type="InterPro" id="IPR005748">
    <property type="entry name" value="DNA_mismatch_repair_MutS"/>
</dbReference>
<dbReference type="InterPro" id="IPR007695">
    <property type="entry name" value="DNA_mismatch_repair_MutS-lik_N"/>
</dbReference>
<dbReference type="InterPro" id="IPR017261">
    <property type="entry name" value="DNA_mismatch_repair_MutS/MSH"/>
</dbReference>
<dbReference type="InterPro" id="IPR000432">
    <property type="entry name" value="DNA_mismatch_repair_MutS_C"/>
</dbReference>
<dbReference type="InterPro" id="IPR007861">
    <property type="entry name" value="DNA_mismatch_repair_MutS_clamp"/>
</dbReference>
<dbReference type="InterPro" id="IPR007696">
    <property type="entry name" value="DNA_mismatch_repair_MutS_core"/>
</dbReference>
<dbReference type="InterPro" id="IPR016151">
    <property type="entry name" value="DNA_mismatch_repair_MutS_N"/>
</dbReference>
<dbReference type="InterPro" id="IPR036187">
    <property type="entry name" value="DNA_mismatch_repair_MutS_sf"/>
</dbReference>
<dbReference type="InterPro" id="IPR007860">
    <property type="entry name" value="DNA_mmatch_repair_MutS_con_dom"/>
</dbReference>
<dbReference type="InterPro" id="IPR045076">
    <property type="entry name" value="MutS"/>
</dbReference>
<dbReference type="InterPro" id="IPR036678">
    <property type="entry name" value="MutS_con_dom_sf"/>
</dbReference>
<dbReference type="InterPro" id="IPR027417">
    <property type="entry name" value="P-loop_NTPase"/>
</dbReference>
<dbReference type="NCBIfam" id="TIGR01070">
    <property type="entry name" value="mutS1"/>
    <property type="match status" value="1"/>
</dbReference>
<dbReference type="NCBIfam" id="NF003810">
    <property type="entry name" value="PRK05399.1"/>
    <property type="match status" value="1"/>
</dbReference>
<dbReference type="PANTHER" id="PTHR11361:SF34">
    <property type="entry name" value="DNA MISMATCH REPAIR PROTEIN MSH1, MITOCHONDRIAL"/>
    <property type="match status" value="1"/>
</dbReference>
<dbReference type="PANTHER" id="PTHR11361">
    <property type="entry name" value="DNA MISMATCH REPAIR PROTEIN MUTS FAMILY MEMBER"/>
    <property type="match status" value="1"/>
</dbReference>
<dbReference type="Pfam" id="PF01624">
    <property type="entry name" value="MutS_I"/>
    <property type="match status" value="1"/>
</dbReference>
<dbReference type="Pfam" id="PF05188">
    <property type="entry name" value="MutS_II"/>
    <property type="match status" value="1"/>
</dbReference>
<dbReference type="Pfam" id="PF05192">
    <property type="entry name" value="MutS_III"/>
    <property type="match status" value="1"/>
</dbReference>
<dbReference type="Pfam" id="PF05190">
    <property type="entry name" value="MutS_IV"/>
    <property type="match status" value="1"/>
</dbReference>
<dbReference type="Pfam" id="PF00488">
    <property type="entry name" value="MutS_V"/>
    <property type="match status" value="1"/>
</dbReference>
<dbReference type="PIRSF" id="PIRSF037677">
    <property type="entry name" value="DNA_mis_repair_Msh6"/>
    <property type="match status" value="1"/>
</dbReference>
<dbReference type="SMART" id="SM00534">
    <property type="entry name" value="MUTSac"/>
    <property type="match status" value="1"/>
</dbReference>
<dbReference type="SMART" id="SM00533">
    <property type="entry name" value="MUTSd"/>
    <property type="match status" value="1"/>
</dbReference>
<dbReference type="SUPFAM" id="SSF55271">
    <property type="entry name" value="DNA repair protein MutS, domain I"/>
    <property type="match status" value="1"/>
</dbReference>
<dbReference type="SUPFAM" id="SSF53150">
    <property type="entry name" value="DNA repair protein MutS, domain II"/>
    <property type="match status" value="1"/>
</dbReference>
<dbReference type="SUPFAM" id="SSF48334">
    <property type="entry name" value="DNA repair protein MutS, domain III"/>
    <property type="match status" value="1"/>
</dbReference>
<dbReference type="SUPFAM" id="SSF52540">
    <property type="entry name" value="P-loop containing nucleoside triphosphate hydrolases"/>
    <property type="match status" value="1"/>
</dbReference>
<dbReference type="PROSITE" id="PS00486">
    <property type="entry name" value="DNA_MISMATCH_REPAIR_2"/>
    <property type="match status" value="1"/>
</dbReference>
<keyword id="KW-0067">ATP-binding</keyword>
<keyword id="KW-0227">DNA damage</keyword>
<keyword id="KW-0234">DNA repair</keyword>
<keyword id="KW-0238">DNA-binding</keyword>
<keyword id="KW-0547">Nucleotide-binding</keyword>
<protein>
    <recommendedName>
        <fullName evidence="1">DNA mismatch repair protein MutS</fullName>
    </recommendedName>
</protein>
<reference key="1">
    <citation type="journal article" date="2004" name="J. Bacteriol.">
        <title>Complete genome sequence of Rickettsia typhi and comparison with sequences of other Rickettsiae.</title>
        <authorList>
            <person name="McLeod M.P."/>
            <person name="Qin X."/>
            <person name="Karpathy S.E."/>
            <person name="Gioia J."/>
            <person name="Highlander S.K."/>
            <person name="Fox G.E."/>
            <person name="McNeill T.Z."/>
            <person name="Jiang H."/>
            <person name="Muzny D."/>
            <person name="Jacob L.S."/>
            <person name="Hawes A.C."/>
            <person name="Sodergren E."/>
            <person name="Gill R."/>
            <person name="Hume J."/>
            <person name="Morgan M."/>
            <person name="Fan G."/>
            <person name="Amin A.G."/>
            <person name="Gibbs R.A."/>
            <person name="Hong C."/>
            <person name="Yu X.-J."/>
            <person name="Walker D.H."/>
            <person name="Weinstock G.M."/>
        </authorList>
    </citation>
    <scope>NUCLEOTIDE SEQUENCE [LARGE SCALE GENOMIC DNA]</scope>
    <source>
        <strain>ATCC VR-144 / Wilmington</strain>
    </source>
</reference>
<proteinExistence type="inferred from homology"/>
<evidence type="ECO:0000255" key="1">
    <source>
        <dbReference type="HAMAP-Rule" id="MF_00096"/>
    </source>
</evidence>
<organism>
    <name type="scientific">Rickettsia typhi (strain ATCC VR-144 / Wilmington)</name>
    <dbReference type="NCBI Taxonomy" id="257363"/>
    <lineage>
        <taxon>Bacteria</taxon>
        <taxon>Pseudomonadati</taxon>
        <taxon>Pseudomonadota</taxon>
        <taxon>Alphaproteobacteria</taxon>
        <taxon>Rickettsiales</taxon>
        <taxon>Rickettsiaceae</taxon>
        <taxon>Rickettsieae</taxon>
        <taxon>Rickettsia</taxon>
        <taxon>typhus group</taxon>
    </lineage>
</organism>
<accession>Q68X73</accession>
<sequence length="891" mass="100714">MTLCNMNLYEFRQKYNYDVATKMMQQYLDIKFAHLDCLLLFRMGDFYELFYEDAILASNILGIALTKRGKNCEEEIPMCGVPYHALEHYLTKLITENYKVAICDQLETPEEAKKRGGYKAVVTRDVTRIITPGTIIEENLISAAEPNYLTSLVMTKNKKTASICYVDLSTSKIFIVNVPETEILNELARLKSREILLSENLKSSNLADSILKQFNCRITYQVDSFFAINKCEKIILDFYKIRDIKGIGEISSSQICAIGSILEYLSLTQKQNIPNLPIPKIINFHSYMTIDFSTRRNLEIVTNIQGNLHGSVLNTLNHTVTKQGGRLLYHFLSSPLTNIAKINRRLNITEFFYSNLGIVTRIRELLKNTSDIERCLTRITMNRSSGRDLLSIKYTLETAKIINGLFSESHSLNLPNFIGKIIKPLSGDAELYNLIDMSIREDAPNNLNDGGIIKHEFHPKVAQLNDLINNGKLHVEKLKDQYRKETGIDSLKISHNNVLGLFIDITAKNVNKILDPKFIHRQTTVNSVRYTTYELQNLENELVNAQTLVISLEKELYTDICRKVIEKSSYLRILANSLSGLDVFCNFAYIADEYNYTKPEFTNDLSFDIVKGRHPVVEAALLKTSKSFVYNDCHLSEAERICLITGPNMAGKSTYLRQNAIITIIAQIGSFVPAKSAKIGVVDKIFSRIGAADDLIKGQSTFMAEMLETSAILAQSTKNSLIILDEVGRGTSTYDGVSIAWSVLEYIHDKLKCRCLFATHYHELTVMKNFLPALQNYTIAIEESGKDILFLHNIILGTSNKSYGLHVAALAGLPTSVINRAAQILLKFEKISISKGKNIVSTASNNLSLFNFEPQKHISNSKLDEEFKTIDPDKISPKEALELIYKFKKLV</sequence>
<gene>
    <name evidence="1" type="primary">mutS</name>
    <name type="ordered locus">RT0289</name>
</gene>
<name>MUTS_RICTY</name>
<comment type="function">
    <text evidence="1">This protein is involved in the repair of mismatches in DNA. It is possible that it carries out the mismatch recognition step. This protein has a weak ATPase activity.</text>
</comment>
<comment type="similarity">
    <text evidence="1">Belongs to the DNA mismatch repair MutS family.</text>
</comment>